<organism>
    <name type="scientific">Staphylococcus aureus (strain MSSA476)</name>
    <dbReference type="NCBI Taxonomy" id="282459"/>
    <lineage>
        <taxon>Bacteria</taxon>
        <taxon>Bacillati</taxon>
        <taxon>Bacillota</taxon>
        <taxon>Bacilli</taxon>
        <taxon>Bacillales</taxon>
        <taxon>Staphylococcaceae</taxon>
        <taxon>Staphylococcus</taxon>
    </lineage>
</organism>
<feature type="chain" id="PRO_0000351398" description="PTS system glucose-specific EIICBA component">
    <location>
        <begin position="1"/>
        <end position="681"/>
    </location>
</feature>
<feature type="transmembrane region" description="Helical" evidence="4">
    <location>
        <begin position="16"/>
        <end position="36"/>
    </location>
</feature>
<feature type="transmembrane region" description="Helical" evidence="4">
    <location>
        <begin position="73"/>
        <end position="93"/>
    </location>
</feature>
<feature type="transmembrane region" description="Helical" evidence="4">
    <location>
        <begin position="126"/>
        <end position="146"/>
    </location>
</feature>
<feature type="transmembrane region" description="Helical" evidence="4">
    <location>
        <begin position="170"/>
        <end position="190"/>
    </location>
</feature>
<feature type="transmembrane region" description="Helical" evidence="4">
    <location>
        <begin position="199"/>
        <end position="219"/>
    </location>
</feature>
<feature type="transmembrane region" description="Helical" evidence="4">
    <location>
        <begin position="273"/>
        <end position="293"/>
    </location>
</feature>
<feature type="transmembrane region" description="Helical" evidence="4">
    <location>
        <begin position="303"/>
        <end position="323"/>
    </location>
</feature>
<feature type="transmembrane region" description="Helical" evidence="4">
    <location>
        <begin position="328"/>
        <end position="348"/>
    </location>
</feature>
<feature type="transmembrane region" description="Helical" evidence="4">
    <location>
        <begin position="355"/>
        <end position="375"/>
    </location>
</feature>
<feature type="transmembrane region" description="Helical" evidence="4">
    <location>
        <begin position="383"/>
        <end position="403"/>
    </location>
</feature>
<feature type="domain" description="PTS EIIC type-1" evidence="4">
    <location>
        <begin position="3"/>
        <end position="414"/>
    </location>
</feature>
<feature type="domain" description="PTS EIIB type-1" evidence="3">
    <location>
        <begin position="425"/>
        <end position="506"/>
    </location>
</feature>
<feature type="domain" description="PTS EIIA type-1" evidence="2">
    <location>
        <begin position="551"/>
        <end position="655"/>
    </location>
</feature>
<feature type="active site" description="Phosphocysteine intermediate; for EIIB activity" evidence="3">
    <location>
        <position position="447"/>
    </location>
</feature>
<feature type="active site" description="Tele-phosphohistidine intermediate; for EIIA activity" evidence="2">
    <location>
        <position position="603"/>
    </location>
</feature>
<comment type="function">
    <text evidence="1">The phosphoenolpyruvate-dependent sugar phosphotransferase system (sugar PTS), a major carbohydrate active transport system, catalyzes the phosphorylation of incoming sugar substrates concomitantly with their translocation across the cell membrane. This system is involved in glucose transport.</text>
</comment>
<comment type="catalytic activity">
    <reaction evidence="1">
        <text>N(pros)-phospho-L-histidyl-[protein] + D-glucose(out) = D-glucose 6-phosphate(in) + L-histidyl-[protein]</text>
        <dbReference type="Rhea" id="RHEA:33367"/>
        <dbReference type="Rhea" id="RHEA-COMP:9745"/>
        <dbReference type="Rhea" id="RHEA-COMP:9746"/>
        <dbReference type="ChEBI" id="CHEBI:4167"/>
        <dbReference type="ChEBI" id="CHEBI:29979"/>
        <dbReference type="ChEBI" id="CHEBI:61548"/>
        <dbReference type="ChEBI" id="CHEBI:64837"/>
        <dbReference type="EC" id="2.7.1.199"/>
    </reaction>
</comment>
<comment type="subcellular location">
    <subcellularLocation>
        <location evidence="4">Cell membrane</location>
        <topology evidence="4">Multi-pass membrane protein</topology>
    </subcellularLocation>
</comment>
<comment type="domain">
    <text evidence="4">The EIIC domain forms the PTS system translocation channel and contains the specific substrate-binding site.</text>
</comment>
<comment type="domain">
    <text evidence="3">The EIIB domain is phosphorylated by phospho-EIIA on a cysteinyl or histidyl residue, depending on the transported sugar. Then, it transfers the phosphoryl group to the sugar substrate concomitantly with the sugar uptake processed by the EIIC domain.</text>
</comment>
<comment type="domain">
    <text evidence="2">The EIIA domain is phosphorylated by phospho-HPr on a histidyl residue. Then, it transfers the phosphoryl group to the EIIB domain.</text>
</comment>
<evidence type="ECO:0000250" key="1">
    <source>
        <dbReference type="UniProtKB" id="Q57071"/>
    </source>
</evidence>
<evidence type="ECO:0000255" key="2">
    <source>
        <dbReference type="PROSITE-ProRule" id="PRU00416"/>
    </source>
</evidence>
<evidence type="ECO:0000255" key="3">
    <source>
        <dbReference type="PROSITE-ProRule" id="PRU00421"/>
    </source>
</evidence>
<evidence type="ECO:0000255" key="4">
    <source>
        <dbReference type="PROSITE-ProRule" id="PRU00426"/>
    </source>
</evidence>
<evidence type="ECO:0000305" key="5"/>
<gene>
    <name type="primary">ptsG</name>
    <name type="synonym">glcA</name>
    <name type="ordered locus">SAS0164</name>
</gene>
<sequence length="681" mass="73925">MRKKLFGQLQRIGKALMLPVAILPAAGLLLAIGTAMQGESLQHYLPFIQNGGVQTVAKLMTGAGGIIFDNLPMIFALGVAIGLAGGDGVAAIAAFVGYIIMNKTMGDFLQVTPKNIGDPASGYASILGIPTLQTGVFGGIIIGALAAWCYNKFYNINLPSYLGFFAGKRFVPIMMATTSFILAFPMALIWPTIQSGLNAFSTGLLDSNTGVAVFLFGFIKRLLIPFGLHHIFHAPFWFEFGSWKNAAGEIIHGDQRIFIEQIREGAHLTAGKFMQGEFPVMMFGLPAAALAIYHTAKPENKKVVAGLMGSAALTSFLTGITEPLEFSFLFVAPLLFFIHAVLDGLSFLTLYLLDLHLGYTFSGGFIDYFLLGILPNKTQWWLVIPVGLVYAVIYYFVFRFLIVKLKYKTPGREDKQSQAATASATELPYAVLEAMGGKANIKHLDACITRLRVEVNDKSKVDVPGLKDLGASGVLEVGNNMQAIFGPKSDQIKHEMQQIMNGQVVENPTTMEDDKDETVVVAEDKSATSELSHIVHAPLTGEVTPLSEVPDQVFSEKMMGDGIAIKPSQGEVRAPFNGKVQMIFPTKHAIGLVSDSGLELLIHIGLDTVKLNGEGFTLHVEEGQEVKQGDLLINFDLDYIRNHAKSDITPIIVTQGNITNLDFKQGEHGNISFGDQLFEAK</sequence>
<protein>
    <recommendedName>
        <fullName evidence="1">PTS system glucose-specific EIICBA component</fullName>
        <ecNumber evidence="1">2.7.1.199</ecNumber>
    </recommendedName>
    <alternativeName>
        <fullName evidence="1">EIICBA-Glc</fullName>
        <shortName evidence="1">EII-Glc</shortName>
    </alternativeName>
    <alternativeName>
        <fullName evidence="5">EIICBA-Glc 1</fullName>
    </alternativeName>
    <domain>
        <recommendedName>
            <fullName evidence="1">Glucose permease IIC component</fullName>
        </recommendedName>
        <alternativeName>
            <fullName evidence="1">PTS system glucose-specific EIIC component</fullName>
        </alternativeName>
    </domain>
    <domain>
        <recommendedName>
            <fullName evidence="1">Glucose-specific phosphotransferase enzyme IIB component</fullName>
        </recommendedName>
        <alternativeName>
            <fullName evidence="1">PTS system glucose-specific EIIB component</fullName>
        </alternativeName>
    </domain>
    <domain>
        <recommendedName>
            <fullName evidence="1">Glucose-specific phosphotransferase enzyme IIA component</fullName>
        </recommendedName>
        <alternativeName>
            <fullName evidence="1">PTS system glucose-specific EIIA component</fullName>
        </alternativeName>
    </domain>
</protein>
<name>PTG3C_STAAS</name>
<keyword id="KW-1003">Cell membrane</keyword>
<keyword id="KW-0418">Kinase</keyword>
<keyword id="KW-0472">Membrane</keyword>
<keyword id="KW-0598">Phosphotransferase system</keyword>
<keyword id="KW-0762">Sugar transport</keyword>
<keyword id="KW-0808">Transferase</keyword>
<keyword id="KW-0812">Transmembrane</keyword>
<keyword id="KW-1133">Transmembrane helix</keyword>
<keyword id="KW-0813">Transport</keyword>
<reference key="1">
    <citation type="journal article" date="2004" name="Proc. Natl. Acad. Sci. U.S.A.">
        <title>Complete genomes of two clinical Staphylococcus aureus strains: evidence for the rapid evolution of virulence and drug resistance.</title>
        <authorList>
            <person name="Holden M.T.G."/>
            <person name="Feil E.J."/>
            <person name="Lindsay J.A."/>
            <person name="Peacock S.J."/>
            <person name="Day N.P.J."/>
            <person name="Enright M.C."/>
            <person name="Foster T.J."/>
            <person name="Moore C.E."/>
            <person name="Hurst L."/>
            <person name="Atkin R."/>
            <person name="Barron A."/>
            <person name="Bason N."/>
            <person name="Bentley S.D."/>
            <person name="Chillingworth C."/>
            <person name="Chillingworth T."/>
            <person name="Churcher C."/>
            <person name="Clark L."/>
            <person name="Corton C."/>
            <person name="Cronin A."/>
            <person name="Doggett J."/>
            <person name="Dowd L."/>
            <person name="Feltwell T."/>
            <person name="Hance Z."/>
            <person name="Harris B."/>
            <person name="Hauser H."/>
            <person name="Holroyd S."/>
            <person name="Jagels K."/>
            <person name="James K.D."/>
            <person name="Lennard N."/>
            <person name="Line A."/>
            <person name="Mayes R."/>
            <person name="Moule S."/>
            <person name="Mungall K."/>
            <person name="Ormond D."/>
            <person name="Quail M.A."/>
            <person name="Rabbinowitsch E."/>
            <person name="Rutherford K.M."/>
            <person name="Sanders M."/>
            <person name="Sharp S."/>
            <person name="Simmonds M."/>
            <person name="Stevens K."/>
            <person name="Whitehead S."/>
            <person name="Barrell B.G."/>
            <person name="Spratt B.G."/>
            <person name="Parkhill J."/>
        </authorList>
    </citation>
    <scope>NUCLEOTIDE SEQUENCE [LARGE SCALE GENOMIC DNA]</scope>
    <source>
        <strain>MSSA476</strain>
    </source>
</reference>
<dbReference type="EC" id="2.7.1.199" evidence="1"/>
<dbReference type="EMBL" id="BX571857">
    <property type="protein sequence ID" value="CAG41932.1"/>
    <property type="molecule type" value="Genomic_DNA"/>
</dbReference>
<dbReference type="RefSeq" id="WP_001227724.1">
    <property type="nucleotide sequence ID" value="NC_002953.3"/>
</dbReference>
<dbReference type="SMR" id="Q6GCT7"/>
<dbReference type="KEGG" id="sas:SAS0164"/>
<dbReference type="HOGENOM" id="CLU_012312_1_1_9"/>
<dbReference type="GO" id="GO:0005886">
    <property type="term" value="C:plasma membrane"/>
    <property type="evidence" value="ECO:0007669"/>
    <property type="project" value="UniProtKB-SubCell"/>
</dbReference>
<dbReference type="GO" id="GO:0055056">
    <property type="term" value="F:D-glucose transmembrane transporter activity"/>
    <property type="evidence" value="ECO:0007669"/>
    <property type="project" value="InterPro"/>
</dbReference>
<dbReference type="GO" id="GO:0016301">
    <property type="term" value="F:kinase activity"/>
    <property type="evidence" value="ECO:0007669"/>
    <property type="project" value="UniProtKB-KW"/>
</dbReference>
<dbReference type="GO" id="GO:0008982">
    <property type="term" value="F:protein-N(PI)-phosphohistidine-sugar phosphotransferase activity"/>
    <property type="evidence" value="ECO:0007669"/>
    <property type="project" value="InterPro"/>
</dbReference>
<dbReference type="GO" id="GO:0090563">
    <property type="term" value="F:protein-phosphocysteine-sugar phosphotransferase activity"/>
    <property type="evidence" value="ECO:0007669"/>
    <property type="project" value="TreeGrafter"/>
</dbReference>
<dbReference type="GO" id="GO:1904659">
    <property type="term" value="P:D-glucose transmembrane transport"/>
    <property type="evidence" value="ECO:0007669"/>
    <property type="project" value="InterPro"/>
</dbReference>
<dbReference type="GO" id="GO:0009401">
    <property type="term" value="P:phosphoenolpyruvate-dependent sugar phosphotransferase system"/>
    <property type="evidence" value="ECO:0007669"/>
    <property type="project" value="UniProtKB-KW"/>
</dbReference>
<dbReference type="CDD" id="cd00210">
    <property type="entry name" value="PTS_IIA_glc"/>
    <property type="match status" value="1"/>
</dbReference>
<dbReference type="CDD" id="cd00212">
    <property type="entry name" value="PTS_IIB_glc"/>
    <property type="match status" value="1"/>
</dbReference>
<dbReference type="FunFam" id="2.70.70.10:FF:000001">
    <property type="entry name" value="PTS system glucose-specific IIA component"/>
    <property type="match status" value="1"/>
</dbReference>
<dbReference type="FunFam" id="3.30.1360.60:FF:000001">
    <property type="entry name" value="PTS system glucose-specific IIBC component PtsG"/>
    <property type="match status" value="1"/>
</dbReference>
<dbReference type="Gene3D" id="2.70.70.10">
    <property type="entry name" value="Glucose Permease (Domain IIA)"/>
    <property type="match status" value="1"/>
</dbReference>
<dbReference type="Gene3D" id="3.30.1360.60">
    <property type="entry name" value="Glucose permease domain IIB"/>
    <property type="match status" value="1"/>
</dbReference>
<dbReference type="InterPro" id="IPR011055">
    <property type="entry name" value="Dup_hybrid_motif"/>
</dbReference>
<dbReference type="InterPro" id="IPR036878">
    <property type="entry name" value="Glu_permease_IIB"/>
</dbReference>
<dbReference type="InterPro" id="IPR018113">
    <property type="entry name" value="PTrfase_EIIB_Cys"/>
</dbReference>
<dbReference type="InterPro" id="IPR001127">
    <property type="entry name" value="PTS_EIIA_1_perm"/>
</dbReference>
<dbReference type="InterPro" id="IPR003352">
    <property type="entry name" value="PTS_EIIC"/>
</dbReference>
<dbReference type="InterPro" id="IPR013013">
    <property type="entry name" value="PTS_EIIC_1"/>
</dbReference>
<dbReference type="InterPro" id="IPR050429">
    <property type="entry name" value="PTS_Glucose_EIICBA"/>
</dbReference>
<dbReference type="InterPro" id="IPR001996">
    <property type="entry name" value="PTS_IIB_1"/>
</dbReference>
<dbReference type="InterPro" id="IPR011299">
    <property type="entry name" value="PTS_IIBC_glc"/>
</dbReference>
<dbReference type="NCBIfam" id="TIGR00826">
    <property type="entry name" value="EIIB_glc"/>
    <property type="match status" value="1"/>
</dbReference>
<dbReference type="NCBIfam" id="TIGR00830">
    <property type="entry name" value="PTBA"/>
    <property type="match status" value="1"/>
</dbReference>
<dbReference type="NCBIfam" id="TIGR02002">
    <property type="entry name" value="PTS-II-BC-glcB"/>
    <property type="match status" value="1"/>
</dbReference>
<dbReference type="PANTHER" id="PTHR30009">
    <property type="entry name" value="CYTOCHROME C-TYPE SYNTHESIS PROTEIN AND PTS TRANSMEMBRANE COMPONENT"/>
    <property type="match status" value="1"/>
</dbReference>
<dbReference type="PANTHER" id="PTHR30009:SF20">
    <property type="entry name" value="PTS SYSTEM GLUCOSE-SPECIFIC EIICB COMPONENT-RELATED"/>
    <property type="match status" value="1"/>
</dbReference>
<dbReference type="Pfam" id="PF00358">
    <property type="entry name" value="PTS_EIIA_1"/>
    <property type="match status" value="1"/>
</dbReference>
<dbReference type="Pfam" id="PF00367">
    <property type="entry name" value="PTS_EIIB"/>
    <property type="match status" value="1"/>
</dbReference>
<dbReference type="Pfam" id="PF02378">
    <property type="entry name" value="PTS_EIIC"/>
    <property type="match status" value="1"/>
</dbReference>
<dbReference type="SUPFAM" id="SSF51261">
    <property type="entry name" value="Duplicated hybrid motif"/>
    <property type="match status" value="1"/>
</dbReference>
<dbReference type="SUPFAM" id="SSF55604">
    <property type="entry name" value="Glucose permease domain IIB"/>
    <property type="match status" value="1"/>
</dbReference>
<dbReference type="PROSITE" id="PS51093">
    <property type="entry name" value="PTS_EIIA_TYPE_1"/>
    <property type="match status" value="1"/>
</dbReference>
<dbReference type="PROSITE" id="PS00371">
    <property type="entry name" value="PTS_EIIA_TYPE_1_HIS"/>
    <property type="match status" value="1"/>
</dbReference>
<dbReference type="PROSITE" id="PS51098">
    <property type="entry name" value="PTS_EIIB_TYPE_1"/>
    <property type="match status" value="1"/>
</dbReference>
<dbReference type="PROSITE" id="PS01035">
    <property type="entry name" value="PTS_EIIB_TYPE_1_CYS"/>
    <property type="match status" value="1"/>
</dbReference>
<dbReference type="PROSITE" id="PS51103">
    <property type="entry name" value="PTS_EIIC_TYPE_1"/>
    <property type="match status" value="1"/>
</dbReference>
<accession>Q6GCT7</accession>
<proteinExistence type="inferred from homology"/>